<reference key="1">
    <citation type="submission" date="2007-06" db="EMBL/GenBank/DDBJ databases">
        <title>Complete sequence of Methanococcus vannielii SB.</title>
        <authorList>
            <consortium name="US DOE Joint Genome Institute"/>
            <person name="Copeland A."/>
            <person name="Lucas S."/>
            <person name="Lapidus A."/>
            <person name="Barry K."/>
            <person name="Glavina del Rio T."/>
            <person name="Dalin E."/>
            <person name="Tice H."/>
            <person name="Pitluck S."/>
            <person name="Chain P."/>
            <person name="Malfatti S."/>
            <person name="Shin M."/>
            <person name="Vergez L."/>
            <person name="Schmutz J."/>
            <person name="Larimer F."/>
            <person name="Land M."/>
            <person name="Hauser L."/>
            <person name="Kyrpides N."/>
            <person name="Anderson I."/>
            <person name="Sieprawska-Lupa M."/>
            <person name="Whitman W.B."/>
            <person name="Richardson P."/>
        </authorList>
    </citation>
    <scope>NUCLEOTIDE SEQUENCE [LARGE SCALE GENOMIC DNA]</scope>
    <source>
        <strain>ATCC 35089 / DSM 1224 / JCM 13029 / OCM 148 / SB</strain>
    </source>
</reference>
<sequence>MPAPRYKSGSAKKVYKRAPGNRRVLHIRRKKQSSAKCGACGALLNGVPSLRTVQVSKLSKTQRRPERAFGGALCPKCVKKMMVVKARNY</sequence>
<evidence type="ECO:0000255" key="1">
    <source>
        <dbReference type="HAMAP-Rule" id="MF_00349"/>
    </source>
</evidence>
<evidence type="ECO:0000305" key="2"/>
<name>RL34_METVS</name>
<comment type="similarity">
    <text evidence="1">Belongs to the eukaryotic ribosomal protein eL34 family.</text>
</comment>
<dbReference type="EMBL" id="CP000742">
    <property type="protein sequence ID" value="ABR55394.1"/>
    <property type="molecule type" value="Genomic_DNA"/>
</dbReference>
<dbReference type="RefSeq" id="WP_012066308.1">
    <property type="nucleotide sequence ID" value="NC_009634.1"/>
</dbReference>
<dbReference type="SMR" id="A6USC2"/>
<dbReference type="STRING" id="406327.Mevan_1500"/>
<dbReference type="GeneID" id="5325172"/>
<dbReference type="KEGG" id="mvn:Mevan_1500"/>
<dbReference type="eggNOG" id="arCOG04168">
    <property type="taxonomic scope" value="Archaea"/>
</dbReference>
<dbReference type="HOGENOM" id="CLU_118652_2_0_2"/>
<dbReference type="OrthoDB" id="43096at2157"/>
<dbReference type="Proteomes" id="UP000001107">
    <property type="component" value="Chromosome"/>
</dbReference>
<dbReference type="GO" id="GO:1990904">
    <property type="term" value="C:ribonucleoprotein complex"/>
    <property type="evidence" value="ECO:0007669"/>
    <property type="project" value="UniProtKB-KW"/>
</dbReference>
<dbReference type="GO" id="GO:0005840">
    <property type="term" value="C:ribosome"/>
    <property type="evidence" value="ECO:0007669"/>
    <property type="project" value="UniProtKB-KW"/>
</dbReference>
<dbReference type="GO" id="GO:0003735">
    <property type="term" value="F:structural constituent of ribosome"/>
    <property type="evidence" value="ECO:0007669"/>
    <property type="project" value="InterPro"/>
</dbReference>
<dbReference type="GO" id="GO:0006412">
    <property type="term" value="P:translation"/>
    <property type="evidence" value="ECO:0007669"/>
    <property type="project" value="UniProtKB-UniRule"/>
</dbReference>
<dbReference type="Gene3D" id="6.20.340.10">
    <property type="match status" value="1"/>
</dbReference>
<dbReference type="HAMAP" id="MF_00349">
    <property type="entry name" value="Ribosomal_eL34"/>
    <property type="match status" value="1"/>
</dbReference>
<dbReference type="InterPro" id="IPR008195">
    <property type="entry name" value="Ribosomal_eL34"/>
</dbReference>
<dbReference type="InterPro" id="IPR038562">
    <property type="entry name" value="Ribosomal_eL34_C_sf"/>
</dbReference>
<dbReference type="InterPro" id="IPR047868">
    <property type="entry name" value="Ribosomal_L34e_arc-type"/>
</dbReference>
<dbReference type="NCBIfam" id="NF003143">
    <property type="entry name" value="PRK04059.1"/>
    <property type="match status" value="1"/>
</dbReference>
<dbReference type="PANTHER" id="PTHR10759">
    <property type="entry name" value="60S RIBOSOMAL PROTEIN L34"/>
    <property type="match status" value="1"/>
</dbReference>
<dbReference type="Pfam" id="PF01199">
    <property type="entry name" value="Ribosomal_L34e"/>
    <property type="match status" value="1"/>
</dbReference>
<dbReference type="PRINTS" id="PR01250">
    <property type="entry name" value="RIBOSOMALL34"/>
</dbReference>
<protein>
    <recommendedName>
        <fullName evidence="1">Large ribosomal subunit protein eL34</fullName>
    </recommendedName>
    <alternativeName>
        <fullName evidence="2">50S ribosomal protein L34e</fullName>
    </alternativeName>
</protein>
<gene>
    <name evidence="1" type="primary">rpl34e</name>
    <name type="ordered locus">Mevan_1500</name>
</gene>
<proteinExistence type="inferred from homology"/>
<organism>
    <name type="scientific">Methanococcus vannielii (strain ATCC 35089 / DSM 1224 / JCM 13029 / OCM 148 / SB)</name>
    <dbReference type="NCBI Taxonomy" id="406327"/>
    <lineage>
        <taxon>Archaea</taxon>
        <taxon>Methanobacteriati</taxon>
        <taxon>Methanobacteriota</taxon>
        <taxon>Methanomada group</taxon>
        <taxon>Methanococci</taxon>
        <taxon>Methanococcales</taxon>
        <taxon>Methanococcaceae</taxon>
        <taxon>Methanococcus</taxon>
    </lineage>
</organism>
<feature type="chain" id="PRO_1000133413" description="Large ribosomal subunit protein eL34">
    <location>
        <begin position="1"/>
        <end position="89"/>
    </location>
</feature>
<keyword id="KW-0687">Ribonucleoprotein</keyword>
<keyword id="KW-0689">Ribosomal protein</keyword>
<accession>A6USC2</accession>